<accession>Q7A160</accession>
<protein>
    <recommendedName>
        <fullName evidence="1">Heme A synthase</fullName>
        <shortName evidence="1">HAS</shortName>
        <ecNumber evidence="1">1.17.99.9</ecNumber>
    </recommendedName>
    <alternativeName>
        <fullName evidence="1">Cytochrome aa3-controlling protein</fullName>
    </alternativeName>
</protein>
<gene>
    <name evidence="1" type="primary">ctaA</name>
    <name type="ordered locus">MW0998</name>
</gene>
<evidence type="ECO:0000255" key="1">
    <source>
        <dbReference type="HAMAP-Rule" id="MF_01664"/>
    </source>
</evidence>
<dbReference type="EC" id="1.17.99.9" evidence="1"/>
<dbReference type="EMBL" id="BA000033">
    <property type="protein sequence ID" value="BAB94863.1"/>
    <property type="molecule type" value="Genomic_DNA"/>
</dbReference>
<dbReference type="RefSeq" id="WP_000467123.1">
    <property type="nucleotide sequence ID" value="NC_003923.1"/>
</dbReference>
<dbReference type="SMR" id="Q7A160"/>
<dbReference type="KEGG" id="sam:MW0998"/>
<dbReference type="HOGENOM" id="CLU_041525_3_1_9"/>
<dbReference type="UniPathway" id="UPA00269">
    <property type="reaction ID" value="UER00713"/>
</dbReference>
<dbReference type="GO" id="GO:0005886">
    <property type="term" value="C:plasma membrane"/>
    <property type="evidence" value="ECO:0007669"/>
    <property type="project" value="UniProtKB-SubCell"/>
</dbReference>
<dbReference type="GO" id="GO:0046872">
    <property type="term" value="F:metal ion binding"/>
    <property type="evidence" value="ECO:0007669"/>
    <property type="project" value="UniProtKB-KW"/>
</dbReference>
<dbReference type="GO" id="GO:0016653">
    <property type="term" value="F:oxidoreductase activity, acting on NAD(P)H, heme protein as acceptor"/>
    <property type="evidence" value="ECO:0007669"/>
    <property type="project" value="InterPro"/>
</dbReference>
<dbReference type="GO" id="GO:0006784">
    <property type="term" value="P:heme A biosynthetic process"/>
    <property type="evidence" value="ECO:0007669"/>
    <property type="project" value="UniProtKB-UniRule"/>
</dbReference>
<dbReference type="HAMAP" id="MF_01664">
    <property type="entry name" value="HemeA_synth_type1"/>
    <property type="match status" value="1"/>
</dbReference>
<dbReference type="InterPro" id="IPR003780">
    <property type="entry name" value="COX15/CtaA_fam"/>
</dbReference>
<dbReference type="InterPro" id="IPR050450">
    <property type="entry name" value="COX15/CtaA_HemeA_synthase"/>
</dbReference>
<dbReference type="InterPro" id="IPR023755">
    <property type="entry name" value="HemeA_Synthase_type1"/>
</dbReference>
<dbReference type="PANTHER" id="PTHR35457">
    <property type="entry name" value="HEME A SYNTHASE"/>
    <property type="match status" value="1"/>
</dbReference>
<dbReference type="PANTHER" id="PTHR35457:SF1">
    <property type="entry name" value="HEME A SYNTHASE"/>
    <property type="match status" value="1"/>
</dbReference>
<dbReference type="Pfam" id="PF02628">
    <property type="entry name" value="COX15-CtaA"/>
    <property type="match status" value="1"/>
</dbReference>
<name>CTAA_STAAW</name>
<feature type="chain" id="PRO_0000348995" description="Heme A synthase">
    <location>
        <begin position="1"/>
        <end position="303"/>
    </location>
</feature>
<feature type="topological domain" description="Cytoplasmic" evidence="1">
    <location>
        <begin position="1"/>
        <end position="8"/>
    </location>
</feature>
<feature type="transmembrane region" description="Helical" evidence="1">
    <location>
        <begin position="9"/>
        <end position="29"/>
    </location>
</feature>
<feature type="topological domain" description="Extracellular" evidence="1">
    <location>
        <begin position="30"/>
        <end position="67"/>
    </location>
</feature>
<feature type="transmembrane region" description="Helical" evidence="1">
    <location>
        <begin position="68"/>
        <end position="88"/>
    </location>
</feature>
<feature type="topological domain" description="Cytoplasmic" evidence="1">
    <location>
        <begin position="89"/>
        <end position="93"/>
    </location>
</feature>
<feature type="transmembrane region" description="Helical" evidence="1">
    <location>
        <begin position="94"/>
        <end position="114"/>
    </location>
</feature>
<feature type="topological domain" description="Extracellular" evidence="1">
    <location>
        <begin position="115"/>
        <end position="125"/>
    </location>
</feature>
<feature type="transmembrane region" description="Helical" evidence="1">
    <location>
        <begin position="126"/>
        <end position="146"/>
    </location>
</feature>
<feature type="topological domain" description="Cytoplasmic" evidence="1">
    <location>
        <begin position="147"/>
        <end position="163"/>
    </location>
</feature>
<feature type="transmembrane region" description="Helical" evidence="1">
    <location>
        <begin position="164"/>
        <end position="184"/>
    </location>
</feature>
<feature type="topological domain" description="Extracellular" evidence="1">
    <location>
        <begin position="185"/>
        <end position="215"/>
    </location>
</feature>
<feature type="transmembrane region" description="Helical" evidence="1">
    <location>
        <begin position="216"/>
        <end position="236"/>
    </location>
</feature>
<feature type="topological domain" description="Cytoplasmic" evidence="1">
    <location>
        <begin position="237"/>
        <end position="244"/>
    </location>
</feature>
<feature type="transmembrane region" description="Helical" evidence="1">
    <location>
        <begin position="245"/>
        <end position="265"/>
    </location>
</feature>
<feature type="topological domain" description="Extracellular" evidence="1">
    <location>
        <begin position="266"/>
        <end position="270"/>
    </location>
</feature>
<feature type="transmembrane region" description="Helical" evidence="1">
    <location>
        <begin position="271"/>
        <end position="291"/>
    </location>
</feature>
<feature type="topological domain" description="Cytoplasmic" evidence="1">
    <location>
        <begin position="292"/>
        <end position="303"/>
    </location>
</feature>
<feature type="active site" evidence="1">
    <location>
        <position position="60"/>
    </location>
</feature>
<feature type="binding site" description="axial binding residue" evidence="1">
    <location>
        <position position="63"/>
    </location>
    <ligand>
        <name>heme o</name>
        <dbReference type="ChEBI" id="CHEBI:24480"/>
    </ligand>
    <ligandPart>
        <name>Fe</name>
        <dbReference type="ChEBI" id="CHEBI:18248"/>
    </ligandPart>
</feature>
<feature type="binding site" description="axial binding residue" evidence="1">
    <location>
        <position position="125"/>
    </location>
    <ligand>
        <name>heme o</name>
        <dbReference type="ChEBI" id="CHEBI:24480"/>
    </ligand>
    <ligandPart>
        <name>Fe</name>
        <dbReference type="ChEBI" id="CHEBI:18248"/>
    </ligandPart>
</feature>
<feature type="binding site" description="axial binding residue" evidence="1">
    <location>
        <position position="214"/>
    </location>
    <ligand>
        <name>heme b</name>
        <dbReference type="ChEBI" id="CHEBI:60344"/>
    </ligand>
    <ligandPart>
        <name>Fe</name>
        <dbReference type="ChEBI" id="CHEBI:18248"/>
    </ligandPart>
</feature>
<feature type="binding site" description="axial binding residue" evidence="1">
    <location>
        <position position="276"/>
    </location>
    <ligand>
        <name>heme b</name>
        <dbReference type="ChEBI" id="CHEBI:60344"/>
    </ligand>
    <ligandPart>
        <name>Fe</name>
        <dbReference type="ChEBI" id="CHEBI:18248"/>
    </ligandPart>
</feature>
<feature type="disulfide bond" description="Essential for catalytic activity" evidence="1">
    <location>
        <begin position="37"/>
        <end position="44"/>
    </location>
</feature>
<keyword id="KW-1003">Cell membrane</keyword>
<keyword id="KW-1015">Disulfide bond</keyword>
<keyword id="KW-0350">Heme biosynthesis</keyword>
<keyword id="KW-0408">Iron</keyword>
<keyword id="KW-0472">Membrane</keyword>
<keyword id="KW-0479">Metal-binding</keyword>
<keyword id="KW-0560">Oxidoreductase</keyword>
<keyword id="KW-0812">Transmembrane</keyword>
<keyword id="KW-1133">Transmembrane helix</keyword>
<reference key="1">
    <citation type="journal article" date="2002" name="Lancet">
        <title>Genome and virulence determinants of high virulence community-acquired MRSA.</title>
        <authorList>
            <person name="Baba T."/>
            <person name="Takeuchi F."/>
            <person name="Kuroda M."/>
            <person name="Yuzawa H."/>
            <person name="Aoki K."/>
            <person name="Oguchi A."/>
            <person name="Nagai Y."/>
            <person name="Iwama N."/>
            <person name="Asano K."/>
            <person name="Naimi T."/>
            <person name="Kuroda H."/>
            <person name="Cui L."/>
            <person name="Yamamoto K."/>
            <person name="Hiramatsu K."/>
        </authorList>
    </citation>
    <scope>NUCLEOTIDE SEQUENCE [LARGE SCALE GENOMIC DNA]</scope>
    <source>
        <strain>MW2</strain>
    </source>
</reference>
<organism>
    <name type="scientific">Staphylococcus aureus (strain MW2)</name>
    <dbReference type="NCBI Taxonomy" id="196620"/>
    <lineage>
        <taxon>Bacteria</taxon>
        <taxon>Bacillati</taxon>
        <taxon>Bacillota</taxon>
        <taxon>Bacilli</taxon>
        <taxon>Bacillales</taxon>
        <taxon>Staphylococcaceae</taxon>
        <taxon>Staphylococcus</taxon>
    </lineage>
</organism>
<sequence length="303" mass="34060">MFGKKNLKWLGVVATLMMTFVQLGGALVTKTGSADGCGSSWPLCHGALIPEFFPIDTIIELSHRAVSALSLLMVLWLVITAWKHIGYIKEIKPLSIISVGFLLLQALIGAAAVIWQQNDYVLALHFGISLISFSSVFLITLIIFSIDQKYEADELYIKKPLRRLTWLMAIIIYCGVYTGALVRHADASLAYGGWPLPFHDLVPHSEQDWVQLTHRIMAFIVFTIIMITYIHAVKNYPNNRTVHYGYTAAFILVILQVITGALSIMTNVNLIIALFHALFITYLFGMTTYFIMLMLRSVRSDKQ</sequence>
<proteinExistence type="inferred from homology"/>
<comment type="function">
    <text evidence="1">Catalyzes the conversion of heme O to heme A by two successive hydroxylations of the methyl group at C8. The first hydroxylation forms heme I, the second hydroxylation results in an unstable dihydroxymethyl group, which spontaneously dehydrates, resulting in the formyl group of heme A.</text>
</comment>
<comment type="catalytic activity">
    <reaction evidence="1">
        <text>Fe(II)-heme o + 2 A + H2O = Fe(II)-heme a + 2 AH2</text>
        <dbReference type="Rhea" id="RHEA:63388"/>
        <dbReference type="ChEBI" id="CHEBI:13193"/>
        <dbReference type="ChEBI" id="CHEBI:15377"/>
        <dbReference type="ChEBI" id="CHEBI:17499"/>
        <dbReference type="ChEBI" id="CHEBI:60530"/>
        <dbReference type="ChEBI" id="CHEBI:61715"/>
        <dbReference type="EC" id="1.17.99.9"/>
    </reaction>
    <physiologicalReaction direction="left-to-right" evidence="1">
        <dbReference type="Rhea" id="RHEA:63389"/>
    </physiologicalReaction>
</comment>
<comment type="cofactor">
    <cofactor evidence="1">
        <name>heme b</name>
        <dbReference type="ChEBI" id="CHEBI:60344"/>
    </cofactor>
</comment>
<comment type="pathway">
    <text evidence="1">Porphyrin-containing compound metabolism; heme A biosynthesis; heme A from heme O: step 1/1.</text>
</comment>
<comment type="subunit">
    <text evidence="1">Interacts with CtaB.</text>
</comment>
<comment type="subcellular location">
    <subcellularLocation>
        <location evidence="1">Cell membrane</location>
        <topology evidence="1">Multi-pass membrane protein</topology>
    </subcellularLocation>
</comment>
<comment type="domain">
    <text evidence="1">The N-half (TM1-TM4) and C-half (TM5-TM8) domains are connected by an intracellular loop. Each domain is formed from four-helix bundles and they align in a pseudo twofold symmetry manner. The N-half domain is the substrate-heme O binding domain and the C-half domain is the cofactor heme B binding domain.</text>
</comment>
<comment type="domain">
    <text evidence="1">The cysteines of disulfide bond Cys-37 and Cys-44 may be involved in transfer of reducing equivalents from quinol in the membrane to the active site of the enzyme.</text>
</comment>
<comment type="similarity">
    <text evidence="1">Belongs to the COX15/CtaA family. Type 1 subfamily.</text>
</comment>